<evidence type="ECO:0000255" key="1"/>
<evidence type="ECO:0000305" key="2"/>
<reference key="1">
    <citation type="journal article" date="1986" name="J. Mol. Biol.">
        <title>Sequence of the short unique region, short repeats, and part of the long repeats of human cytomegalovirus.</title>
        <authorList>
            <person name="Weston K.M."/>
            <person name="Barrell B.G."/>
        </authorList>
    </citation>
    <scope>NUCLEOTIDE SEQUENCE [GENOMIC DNA]</scope>
</reference>
<reference key="2">
    <citation type="journal article" date="1990" name="Curr. Top. Microbiol. Immunol.">
        <title>Analysis of the protein-coding content of the sequence of human cytomegalovirus strain AD169.</title>
        <authorList>
            <person name="Chee M.S."/>
            <person name="Bankier A.T."/>
            <person name="Beck S."/>
            <person name="Bohni R."/>
            <person name="Brown C.M."/>
            <person name="Cerny R."/>
            <person name="Horsnell T."/>
            <person name="Hutchison C.A. III"/>
            <person name="Kouzarides T."/>
            <person name="Martignetti J.A."/>
            <person name="Preddie E."/>
            <person name="Satchwell S.C."/>
            <person name="Tomlinson P."/>
            <person name="Weston K.M."/>
            <person name="Barrell B.G."/>
        </authorList>
    </citation>
    <scope>NUCLEOTIDE SEQUENCE [LARGE SCALE GENOMIC DNA]</scope>
</reference>
<reference key="3">
    <citation type="journal article" date="2003" name="J. Gen. Virol.">
        <title>The human cytomegalovirus genome revisited: comparison with the chimpanzee cytomegalovirus genome.</title>
        <authorList>
            <person name="Davison A.J."/>
            <person name="Dolan A."/>
            <person name="Akter P."/>
            <person name="Addison C."/>
            <person name="Dargan D.J."/>
            <person name="Alcendor D.J."/>
            <person name="McGeoch D.J."/>
            <person name="Hayward G.S."/>
        </authorList>
    </citation>
    <scope>GENOME REANNOTATION</scope>
</reference>
<reference key="4">
    <citation type="journal article" date="2003" name="J. Gen. Virol.">
        <authorList>
            <person name="Davison A.J."/>
            <person name="Dolan A."/>
            <person name="Akter P."/>
            <person name="Addison C."/>
            <person name="Dargan D.J."/>
            <person name="Alcendor D.J."/>
            <person name="McGeoch D.J."/>
            <person name="Hayward G.S."/>
        </authorList>
    </citation>
    <scope>ERRATUM OF PUBMED:12533697</scope>
</reference>
<organismHost>
    <name type="scientific">Homo sapiens</name>
    <name type="common">Human</name>
    <dbReference type="NCBI Taxonomy" id="9606"/>
</organismHost>
<sequence length="261" mass="29460">MDPPLPSLHSPQWASLLQLHHGLMWLRRFAVLVRVYALVVFHIAISTAFCGMIWLGIPDSHNICQHESSPLLLVFAPSLLWCLVLIQGERHPDDVVLTMGYVGLLSVTTVFYTWCSDLPAILIDYTLVLTLWIACTGAVMVGDSFRAKRWELICSRVLTSVFFITLWVIGDQTVFHHQRILLYGYGAIVFLMMTVTFYGTRYIRDELPAAQTLRGSLLIYVGLVTMFKITLIVLSPNLWRLPWTTVFAAFRSSYCEGGGGS</sequence>
<comment type="subcellular location">
    <subcellularLocation>
        <location evidence="2">Membrane</location>
        <topology evidence="2">Multi-pass membrane protein</topology>
    </subcellularLocation>
</comment>
<comment type="similarity">
    <text evidence="2">Belongs to the cytomegalovirus US12 family.</text>
</comment>
<accession>P09720</accession>
<accession>Q7M6I7</accession>
<organism>
    <name type="scientific">Human cytomegalovirus (strain AD169)</name>
    <name type="common">HHV-5</name>
    <name type="synonym">Human herpesvirus 5</name>
    <dbReference type="NCBI Taxonomy" id="10360"/>
    <lineage>
        <taxon>Viruses</taxon>
        <taxon>Duplodnaviria</taxon>
        <taxon>Heunggongvirae</taxon>
        <taxon>Peploviricota</taxon>
        <taxon>Herviviricetes</taxon>
        <taxon>Herpesvirales</taxon>
        <taxon>Orthoherpesviridae</taxon>
        <taxon>Betaherpesvirinae</taxon>
        <taxon>Cytomegalovirus</taxon>
        <taxon>Cytomegalovirus humanbeta5</taxon>
        <taxon>Human cytomegalovirus</taxon>
    </lineage>
</organism>
<keyword id="KW-0472">Membrane</keyword>
<keyword id="KW-1185">Reference proteome</keyword>
<keyword id="KW-0812">Transmembrane</keyword>
<keyword id="KW-1133">Transmembrane helix</keyword>
<feature type="chain" id="PRO_0000115272" description="Uncharacterized protein HVLF5">
    <location>
        <begin position="1"/>
        <end position="261"/>
    </location>
</feature>
<feature type="transmembrane region" description="Helical" evidence="1">
    <location>
        <begin position="37"/>
        <end position="57"/>
    </location>
</feature>
<feature type="transmembrane region" description="Helical" evidence="1">
    <location>
        <begin position="68"/>
        <end position="88"/>
    </location>
</feature>
<feature type="transmembrane region" description="Helical" evidence="1">
    <location>
        <begin position="95"/>
        <end position="115"/>
    </location>
</feature>
<feature type="transmembrane region" description="Helical" evidence="1">
    <location>
        <begin position="121"/>
        <end position="141"/>
    </location>
</feature>
<feature type="transmembrane region" description="Helical" evidence="1">
    <location>
        <begin position="150"/>
        <end position="170"/>
    </location>
</feature>
<feature type="transmembrane region" description="Helical" evidence="1">
    <location>
        <begin position="180"/>
        <end position="200"/>
    </location>
</feature>
<feature type="transmembrane region" description="Helical" evidence="1">
    <location>
        <begin position="215"/>
        <end position="235"/>
    </location>
</feature>
<dbReference type="EMBL" id="X17403">
    <property type="protein sequence ID" value="CAA35280.1"/>
    <property type="molecule type" value="Genomic_DNA"/>
</dbReference>
<dbReference type="EMBL" id="X04650">
    <property type="protein sequence ID" value="CAB37105.1"/>
    <property type="molecule type" value="Genomic_DNA"/>
</dbReference>
<dbReference type="EMBL" id="BK000394">
    <property type="protein sequence ID" value="DAA00201.1"/>
    <property type="molecule type" value="Genomic_DNA"/>
</dbReference>
<dbReference type="PIR" id="E27230">
    <property type="entry name" value="QQBEF5"/>
</dbReference>
<dbReference type="RefSeq" id="YP_081598.1">
    <property type="nucleotide sequence ID" value="NC_006273.2"/>
</dbReference>
<dbReference type="DNASU" id="3077576"/>
<dbReference type="GeneID" id="3077576"/>
<dbReference type="KEGG" id="vg:3077576"/>
<dbReference type="Proteomes" id="UP000008991">
    <property type="component" value="Segment"/>
</dbReference>
<dbReference type="Proteomes" id="UP000008992">
    <property type="component" value="Segment"/>
</dbReference>
<dbReference type="GO" id="GO:0016020">
    <property type="term" value="C:membrane"/>
    <property type="evidence" value="ECO:0007669"/>
    <property type="project" value="UniProtKB-SubCell"/>
</dbReference>
<proteinExistence type="inferred from homology"/>
<gene>
    <name type="primary">US13</name>
</gene>
<protein>
    <recommendedName>
        <fullName>Uncharacterized protein HVLF5</fullName>
    </recommendedName>
</protein>
<name>US13_HCMVA</name>